<evidence type="ECO:0000250" key="1"/>
<evidence type="ECO:0000255" key="2">
    <source>
        <dbReference type="PROSITE-ProRule" id="PRU00176"/>
    </source>
</evidence>
<evidence type="ECO:0000305" key="3"/>
<gene>
    <name type="primary">Cbp20</name>
    <name type="ORF">AGAP002547</name>
</gene>
<sequence>MSSQIQSVHTPSVSLSKYRDQHFKGSRHEQEKLLRVSSTLYVGNLSFYTTEEQIHELFSRCGDVRRIIMGLDKFKKTPCGFCFVEYYSRLDAESAMRYINGTRLDDRIVRVDWDAGFIEGRQYGRGKTGGQVRDEYRQDHDLGRGGYGKMVQMGQLGAPSMRE</sequence>
<protein>
    <recommendedName>
        <fullName>Nuclear cap-binding protein subunit 2</fullName>
    </recommendedName>
    <alternativeName>
        <fullName>20 kDa nuclear cap-binding protein</fullName>
    </alternativeName>
    <alternativeName>
        <fullName>NCBP 20 kDa subunit</fullName>
        <shortName>CBP20</shortName>
    </alternativeName>
</protein>
<reference key="1">
    <citation type="journal article" date="2002" name="Science">
        <title>The genome sequence of the malaria mosquito Anopheles gambiae.</title>
        <authorList>
            <person name="Holt R.A."/>
            <person name="Subramanian G.M."/>
            <person name="Halpern A."/>
            <person name="Sutton G.G."/>
            <person name="Charlab R."/>
            <person name="Nusskern D.R."/>
            <person name="Wincker P."/>
            <person name="Clark A.G."/>
            <person name="Ribeiro J.M.C."/>
            <person name="Wides R."/>
            <person name="Salzberg S.L."/>
            <person name="Loftus B.J."/>
            <person name="Yandell M.D."/>
            <person name="Majoros W.H."/>
            <person name="Rusch D.B."/>
            <person name="Lai Z."/>
            <person name="Kraft C.L."/>
            <person name="Abril J.F."/>
            <person name="Anthouard V."/>
            <person name="Arensburger P."/>
            <person name="Atkinson P.W."/>
            <person name="Baden H."/>
            <person name="de Berardinis V."/>
            <person name="Baldwin D."/>
            <person name="Benes V."/>
            <person name="Biedler J."/>
            <person name="Blass C."/>
            <person name="Bolanos R."/>
            <person name="Boscus D."/>
            <person name="Barnstead M."/>
            <person name="Cai S."/>
            <person name="Center A."/>
            <person name="Chaturverdi K."/>
            <person name="Christophides G.K."/>
            <person name="Chrystal M.A.M."/>
            <person name="Clamp M."/>
            <person name="Cravchik A."/>
            <person name="Curwen V."/>
            <person name="Dana A."/>
            <person name="Delcher A."/>
            <person name="Dew I."/>
            <person name="Evans C.A."/>
            <person name="Flanigan M."/>
            <person name="Grundschober-Freimoser A."/>
            <person name="Friedli L."/>
            <person name="Gu Z."/>
            <person name="Guan P."/>
            <person name="Guigo R."/>
            <person name="Hillenmeyer M.E."/>
            <person name="Hladun S.L."/>
            <person name="Hogan J.R."/>
            <person name="Hong Y.S."/>
            <person name="Hoover J."/>
            <person name="Jaillon O."/>
            <person name="Ke Z."/>
            <person name="Kodira C.D."/>
            <person name="Kokoza E."/>
            <person name="Koutsos A."/>
            <person name="Letunic I."/>
            <person name="Levitsky A.A."/>
            <person name="Liang Y."/>
            <person name="Lin J.-J."/>
            <person name="Lobo N.F."/>
            <person name="Lopez J.R."/>
            <person name="Malek J.A."/>
            <person name="McIntosh T.C."/>
            <person name="Meister S."/>
            <person name="Miller J.R."/>
            <person name="Mobarry C."/>
            <person name="Mongin E."/>
            <person name="Murphy S.D."/>
            <person name="O'Brochta D.A."/>
            <person name="Pfannkoch C."/>
            <person name="Qi R."/>
            <person name="Regier M.A."/>
            <person name="Remington K."/>
            <person name="Shao H."/>
            <person name="Sharakhova M.V."/>
            <person name="Sitter C.D."/>
            <person name="Shetty J."/>
            <person name="Smith T.J."/>
            <person name="Strong R."/>
            <person name="Sun J."/>
            <person name="Thomasova D."/>
            <person name="Ton L.Q."/>
            <person name="Topalis P."/>
            <person name="Tu Z.J."/>
            <person name="Unger M.F."/>
            <person name="Walenz B."/>
            <person name="Wang A.H."/>
            <person name="Wang J."/>
            <person name="Wang M."/>
            <person name="Wang X."/>
            <person name="Woodford K.J."/>
            <person name="Wortman J.R."/>
            <person name="Wu M."/>
            <person name="Yao A."/>
            <person name="Zdobnov E.M."/>
            <person name="Zhang H."/>
            <person name="Zhao Q."/>
            <person name="Zhao S."/>
            <person name="Zhu S.C."/>
            <person name="Zhimulev I."/>
            <person name="Coluzzi M."/>
            <person name="della Torre A."/>
            <person name="Roth C.W."/>
            <person name="Louis C."/>
            <person name="Kalush F."/>
            <person name="Mural R.J."/>
            <person name="Myers E.W."/>
            <person name="Adams M.D."/>
            <person name="Smith H.O."/>
            <person name="Broder S."/>
            <person name="Gardner M.J."/>
            <person name="Fraser C.M."/>
            <person name="Birney E."/>
            <person name="Bork P."/>
            <person name="Brey P.T."/>
            <person name="Venter J.C."/>
            <person name="Weissenbach J."/>
            <person name="Kafatos F.C."/>
            <person name="Collins F.H."/>
            <person name="Hoffman S.L."/>
        </authorList>
    </citation>
    <scope>NUCLEOTIDE SEQUENCE [LARGE SCALE GENOMIC DNA]</scope>
    <source>
        <strain>PEST</strain>
    </source>
</reference>
<organism>
    <name type="scientific">Anopheles gambiae</name>
    <name type="common">African malaria mosquito</name>
    <dbReference type="NCBI Taxonomy" id="7165"/>
    <lineage>
        <taxon>Eukaryota</taxon>
        <taxon>Metazoa</taxon>
        <taxon>Ecdysozoa</taxon>
        <taxon>Arthropoda</taxon>
        <taxon>Hexapoda</taxon>
        <taxon>Insecta</taxon>
        <taxon>Pterygota</taxon>
        <taxon>Neoptera</taxon>
        <taxon>Endopterygota</taxon>
        <taxon>Diptera</taxon>
        <taxon>Nematocera</taxon>
        <taxon>Culicoidea</taxon>
        <taxon>Culicidae</taxon>
        <taxon>Anophelinae</taxon>
        <taxon>Anopheles</taxon>
    </lineage>
</organism>
<name>NCBP2_ANOGA</name>
<accession>Q7QCB6</accession>
<proteinExistence type="inferred from homology"/>
<dbReference type="EMBL" id="AAAB01008859">
    <property type="protein sequence ID" value="EAA07524.3"/>
    <property type="molecule type" value="Genomic_DNA"/>
</dbReference>
<dbReference type="SMR" id="Q7QCB6"/>
<dbReference type="FunCoup" id="Q7QCB6">
    <property type="interactions" value="2353"/>
</dbReference>
<dbReference type="STRING" id="7165.Q7QCB6"/>
<dbReference type="PaxDb" id="7165-AGAP002547-PA"/>
<dbReference type="EnsemblMetazoa" id="AGAP002547-RA">
    <property type="protein sequence ID" value="AGAP002547-PA"/>
    <property type="gene ID" value="AGAP002547"/>
</dbReference>
<dbReference type="GeneID" id="3290635"/>
<dbReference type="KEGG" id="aga:3290635"/>
<dbReference type="CTD" id="42166"/>
<dbReference type="VEuPathDB" id="VectorBase:AGAMI1_005131"/>
<dbReference type="VEuPathDB" id="VectorBase:AGAP002547"/>
<dbReference type="eggNOG" id="KOG0121">
    <property type="taxonomic scope" value="Eukaryota"/>
</dbReference>
<dbReference type="HOGENOM" id="CLU_070952_2_0_1"/>
<dbReference type="InParanoid" id="Q7QCB6"/>
<dbReference type="OMA" id="DIRRIIM"/>
<dbReference type="PhylomeDB" id="Q7QCB6"/>
<dbReference type="Proteomes" id="UP000007062">
    <property type="component" value="Chromosome 2R"/>
</dbReference>
<dbReference type="GO" id="GO:0005846">
    <property type="term" value="C:nuclear cap binding complex"/>
    <property type="evidence" value="ECO:0000318"/>
    <property type="project" value="GO_Central"/>
</dbReference>
<dbReference type="GO" id="GO:0005634">
    <property type="term" value="C:nucleus"/>
    <property type="evidence" value="ECO:0007669"/>
    <property type="project" value="UniProtKB-SubCell"/>
</dbReference>
<dbReference type="GO" id="GO:0000339">
    <property type="term" value="F:RNA cap binding"/>
    <property type="evidence" value="ECO:0000318"/>
    <property type="project" value="GO_Central"/>
</dbReference>
<dbReference type="GO" id="GO:0045292">
    <property type="term" value="P:mRNA cis splicing, via spliceosome"/>
    <property type="evidence" value="ECO:0007669"/>
    <property type="project" value="InterPro"/>
</dbReference>
<dbReference type="GO" id="GO:0000398">
    <property type="term" value="P:mRNA splicing, via spliceosome"/>
    <property type="evidence" value="ECO:0000318"/>
    <property type="project" value="GO_Central"/>
</dbReference>
<dbReference type="GO" id="GO:0031047">
    <property type="term" value="P:regulatory ncRNA-mediated gene silencing"/>
    <property type="evidence" value="ECO:0007669"/>
    <property type="project" value="UniProtKB-KW"/>
</dbReference>
<dbReference type="CDD" id="cd12240">
    <property type="entry name" value="RRM_NCBP2"/>
    <property type="match status" value="1"/>
</dbReference>
<dbReference type="FunFam" id="3.30.70.330:FF:000128">
    <property type="entry name" value="Nuclear cap-binding protein subunit 2"/>
    <property type="match status" value="1"/>
</dbReference>
<dbReference type="Gene3D" id="3.30.70.330">
    <property type="match status" value="1"/>
</dbReference>
<dbReference type="InterPro" id="IPR027157">
    <property type="entry name" value="NCBP2"/>
</dbReference>
<dbReference type="InterPro" id="IPR034148">
    <property type="entry name" value="NCBP2_RRM"/>
</dbReference>
<dbReference type="InterPro" id="IPR012677">
    <property type="entry name" value="Nucleotide-bd_a/b_plait_sf"/>
</dbReference>
<dbReference type="InterPro" id="IPR035979">
    <property type="entry name" value="RBD_domain_sf"/>
</dbReference>
<dbReference type="InterPro" id="IPR000504">
    <property type="entry name" value="RRM_dom"/>
</dbReference>
<dbReference type="PANTHER" id="PTHR18847">
    <property type="entry name" value="20 KD NUCLEAR CAP BINDING PROTEIN"/>
    <property type="match status" value="1"/>
</dbReference>
<dbReference type="PANTHER" id="PTHR18847:SF0">
    <property type="entry name" value="NUCLEAR CAP-BINDING PROTEIN SUBUNIT 2"/>
    <property type="match status" value="1"/>
</dbReference>
<dbReference type="Pfam" id="PF00076">
    <property type="entry name" value="RRM_1"/>
    <property type="match status" value="1"/>
</dbReference>
<dbReference type="SMART" id="SM00360">
    <property type="entry name" value="RRM"/>
    <property type="match status" value="1"/>
</dbReference>
<dbReference type="SUPFAM" id="SSF54928">
    <property type="entry name" value="RNA-binding domain, RBD"/>
    <property type="match status" value="1"/>
</dbReference>
<dbReference type="PROSITE" id="PS50102">
    <property type="entry name" value="RRM"/>
    <property type="match status" value="1"/>
</dbReference>
<keyword id="KW-0507">mRNA processing</keyword>
<keyword id="KW-0508">mRNA splicing</keyword>
<keyword id="KW-0539">Nucleus</keyword>
<keyword id="KW-1185">Reference proteome</keyword>
<keyword id="KW-0694">RNA-binding</keyword>
<keyword id="KW-0943">RNA-mediated gene silencing</keyword>
<comment type="function">
    <text evidence="1">Component of the cap-binding complex (CBC), which binds co-transcriptionally to the 5' cap of pre-mRNAs and is involved in various processes such as pre-mRNA splicing and RNA-mediated gene silencing (RNAi). The CBC complex is involved in miRNA-mediated RNA interference and is required for primary microRNAs (miRNAs) processing. Also involved in innate immunity via the short interfering RNAs (siRNAs) processing machinery by restricting the viral RNA production. In the CBC complex, Cbp20 recognizes and binds capped RNAs (m7GpppG-capped RNA) but requires Cbp80 to stabilize the movement of its N-terminal loop and lock the CBC into a high affinity cap-binding state with the cap structure (By similarity).</text>
</comment>
<comment type="subunit">
    <text evidence="1">Component of the nuclear cap-binding complex (CBC), a heterodimer composed of Cbp80 and Cbp20 that interacts with m7GpppG-capped RNA.</text>
</comment>
<comment type="subcellular location">
    <subcellularLocation>
        <location evidence="1">Nucleus</location>
    </subcellularLocation>
</comment>
<comment type="similarity">
    <text evidence="3">Belongs to the RRM NCBP2 family.</text>
</comment>
<feature type="chain" id="PRO_0000385259" description="Nuclear cap-binding protein subunit 2">
    <location>
        <begin position="1"/>
        <end position="163"/>
    </location>
</feature>
<feature type="domain" description="RRM" evidence="2">
    <location>
        <begin position="38"/>
        <end position="116"/>
    </location>
</feature>
<feature type="binding site" evidence="1">
    <location>
        <position position="18"/>
    </location>
    <ligand>
        <name>mRNA</name>
        <dbReference type="ChEBI" id="CHEBI:33699"/>
    </ligand>
    <ligandPart>
        <name>mRNA cap</name>
    </ligandPart>
</feature>
<feature type="binding site" evidence="1">
    <location>
        <position position="41"/>
    </location>
    <ligand>
        <name>mRNA</name>
        <dbReference type="ChEBI" id="CHEBI:33699"/>
    </ligand>
    <ligandPart>
        <name>mRNA cap</name>
    </ligandPart>
</feature>
<feature type="binding site" evidence="1">
    <location>
        <begin position="110"/>
        <end position="114"/>
    </location>
    <ligand>
        <name>mRNA</name>
        <dbReference type="ChEBI" id="CHEBI:33699"/>
    </ligand>
    <ligandPart>
        <name>mRNA cap</name>
    </ligandPart>
</feature>
<feature type="binding site" evidence="1">
    <location>
        <begin position="121"/>
        <end position="125"/>
    </location>
    <ligand>
        <name>mRNA</name>
        <dbReference type="ChEBI" id="CHEBI:33699"/>
    </ligand>
    <ligandPart>
        <name>mRNA cap</name>
    </ligandPart>
</feature>
<feature type="binding site" evidence="1">
    <location>
        <begin position="131"/>
        <end position="132"/>
    </location>
    <ligand>
        <name>mRNA</name>
        <dbReference type="ChEBI" id="CHEBI:33699"/>
    </ligand>
    <ligandPart>
        <name>mRNA cap</name>
    </ligandPart>
</feature>